<organism>
    <name type="scientific">Hahella chejuensis (strain KCTC 2396)</name>
    <dbReference type="NCBI Taxonomy" id="349521"/>
    <lineage>
        <taxon>Bacteria</taxon>
        <taxon>Pseudomonadati</taxon>
        <taxon>Pseudomonadota</taxon>
        <taxon>Gammaproteobacteria</taxon>
        <taxon>Oceanospirillales</taxon>
        <taxon>Hahellaceae</taxon>
        <taxon>Hahella</taxon>
    </lineage>
</organism>
<comment type="function">
    <text evidence="1">Part of the ABC transporter complex ModABC involved in molybdenum import. Responsible for energy coupling to the transport system.</text>
</comment>
<comment type="catalytic activity">
    <reaction evidence="1">
        <text>molybdate(out) + ATP + H2O = molybdate(in) + ADP + phosphate + H(+)</text>
        <dbReference type="Rhea" id="RHEA:22020"/>
        <dbReference type="ChEBI" id="CHEBI:15377"/>
        <dbReference type="ChEBI" id="CHEBI:15378"/>
        <dbReference type="ChEBI" id="CHEBI:30616"/>
        <dbReference type="ChEBI" id="CHEBI:36264"/>
        <dbReference type="ChEBI" id="CHEBI:43474"/>
        <dbReference type="ChEBI" id="CHEBI:456216"/>
        <dbReference type="EC" id="7.3.2.5"/>
    </reaction>
</comment>
<comment type="subunit">
    <text evidence="1">The complex is composed of two ATP-binding proteins (ModC), two transmembrane proteins (ModB) and a solute-binding protein (ModA).</text>
</comment>
<comment type="subcellular location">
    <subcellularLocation>
        <location evidence="1">Cell inner membrane</location>
        <topology evidence="1">Peripheral membrane protein</topology>
    </subcellularLocation>
</comment>
<comment type="similarity">
    <text evidence="1">Belongs to the ABC transporter superfamily. Molybdate importer (TC 3.A.1.8) family.</text>
</comment>
<dbReference type="EC" id="7.3.2.5" evidence="1"/>
<dbReference type="EMBL" id="CP000155">
    <property type="protein sequence ID" value="ABC29259.1"/>
    <property type="molecule type" value="Genomic_DNA"/>
</dbReference>
<dbReference type="RefSeq" id="WP_011396328.1">
    <property type="nucleotide sequence ID" value="NC_007645.1"/>
</dbReference>
<dbReference type="SMR" id="Q2SJB5"/>
<dbReference type="STRING" id="349521.HCH_02452"/>
<dbReference type="KEGG" id="hch:HCH_02452"/>
<dbReference type="eggNOG" id="COG4148">
    <property type="taxonomic scope" value="Bacteria"/>
</dbReference>
<dbReference type="HOGENOM" id="CLU_000604_1_1_6"/>
<dbReference type="OrthoDB" id="9802264at2"/>
<dbReference type="Proteomes" id="UP000000238">
    <property type="component" value="Chromosome"/>
</dbReference>
<dbReference type="GO" id="GO:0005886">
    <property type="term" value="C:plasma membrane"/>
    <property type="evidence" value="ECO:0007669"/>
    <property type="project" value="UniProtKB-SubCell"/>
</dbReference>
<dbReference type="GO" id="GO:0015412">
    <property type="term" value="F:ABC-type molybdate transporter activity"/>
    <property type="evidence" value="ECO:0007669"/>
    <property type="project" value="UniProtKB-EC"/>
</dbReference>
<dbReference type="GO" id="GO:0005524">
    <property type="term" value="F:ATP binding"/>
    <property type="evidence" value="ECO:0007669"/>
    <property type="project" value="UniProtKB-KW"/>
</dbReference>
<dbReference type="GO" id="GO:0016887">
    <property type="term" value="F:ATP hydrolysis activity"/>
    <property type="evidence" value="ECO:0007669"/>
    <property type="project" value="InterPro"/>
</dbReference>
<dbReference type="Gene3D" id="2.40.50.100">
    <property type="match status" value="1"/>
</dbReference>
<dbReference type="Gene3D" id="3.40.50.300">
    <property type="entry name" value="P-loop containing nucleotide triphosphate hydrolases"/>
    <property type="match status" value="1"/>
</dbReference>
<dbReference type="InterPro" id="IPR003593">
    <property type="entry name" value="AAA+_ATPase"/>
</dbReference>
<dbReference type="InterPro" id="IPR003439">
    <property type="entry name" value="ABC_transporter-like_ATP-bd"/>
</dbReference>
<dbReference type="InterPro" id="IPR017871">
    <property type="entry name" value="ABC_transporter-like_CS"/>
</dbReference>
<dbReference type="InterPro" id="IPR008995">
    <property type="entry name" value="Mo/tungstate-bd_C_term_dom"/>
</dbReference>
<dbReference type="InterPro" id="IPR011868">
    <property type="entry name" value="ModC_ABC_ATP-bd"/>
</dbReference>
<dbReference type="InterPro" id="IPR050334">
    <property type="entry name" value="Molybdenum_import_ModC"/>
</dbReference>
<dbReference type="InterPro" id="IPR004606">
    <property type="entry name" value="Mop_domain"/>
</dbReference>
<dbReference type="InterPro" id="IPR027417">
    <property type="entry name" value="P-loop_NTPase"/>
</dbReference>
<dbReference type="InterPro" id="IPR005116">
    <property type="entry name" value="Transp-assoc_OB_typ1"/>
</dbReference>
<dbReference type="NCBIfam" id="TIGR02142">
    <property type="entry name" value="modC_ABC"/>
    <property type="match status" value="1"/>
</dbReference>
<dbReference type="PANTHER" id="PTHR43514">
    <property type="entry name" value="ABC TRANSPORTER I FAMILY MEMBER 10"/>
    <property type="match status" value="1"/>
</dbReference>
<dbReference type="PANTHER" id="PTHR43514:SF10">
    <property type="entry name" value="MOLYBDENUM IMPORT ATP-BINDING PROTEIN MODC 2"/>
    <property type="match status" value="1"/>
</dbReference>
<dbReference type="Pfam" id="PF00005">
    <property type="entry name" value="ABC_tran"/>
    <property type="match status" value="1"/>
</dbReference>
<dbReference type="Pfam" id="PF03459">
    <property type="entry name" value="TOBE"/>
    <property type="match status" value="1"/>
</dbReference>
<dbReference type="SMART" id="SM00382">
    <property type="entry name" value="AAA"/>
    <property type="match status" value="1"/>
</dbReference>
<dbReference type="SUPFAM" id="SSF50331">
    <property type="entry name" value="MOP-like"/>
    <property type="match status" value="1"/>
</dbReference>
<dbReference type="SUPFAM" id="SSF52540">
    <property type="entry name" value="P-loop containing nucleoside triphosphate hydrolases"/>
    <property type="match status" value="1"/>
</dbReference>
<dbReference type="PROSITE" id="PS00211">
    <property type="entry name" value="ABC_TRANSPORTER_1"/>
    <property type="match status" value="1"/>
</dbReference>
<dbReference type="PROSITE" id="PS50893">
    <property type="entry name" value="ABC_TRANSPORTER_2"/>
    <property type="match status" value="1"/>
</dbReference>
<dbReference type="PROSITE" id="PS51241">
    <property type="entry name" value="MODC"/>
    <property type="match status" value="1"/>
</dbReference>
<dbReference type="PROSITE" id="PS51866">
    <property type="entry name" value="MOP"/>
    <property type="match status" value="1"/>
</dbReference>
<reference key="1">
    <citation type="journal article" date="2005" name="Nucleic Acids Res.">
        <title>Genomic blueprint of Hahella chejuensis, a marine microbe producing an algicidal agent.</title>
        <authorList>
            <person name="Jeong H."/>
            <person name="Yim J.H."/>
            <person name="Lee C."/>
            <person name="Choi S.-H."/>
            <person name="Park Y.K."/>
            <person name="Yoon S.H."/>
            <person name="Hur C.-G."/>
            <person name="Kang H.-Y."/>
            <person name="Kim D."/>
            <person name="Lee H.H."/>
            <person name="Park K.H."/>
            <person name="Park S.-H."/>
            <person name="Park H.-S."/>
            <person name="Lee H.K."/>
            <person name="Oh T.K."/>
            <person name="Kim J.F."/>
        </authorList>
    </citation>
    <scope>NUCLEOTIDE SEQUENCE [LARGE SCALE GENOMIC DNA]</scope>
    <source>
        <strain>KCTC 2396</strain>
    </source>
</reference>
<sequence>MNDDISASFFSHRGDFTLDVAFHTPGQGVTALFGRSGSGKTTLLRFIAGLERAEKGALQIKDEVWQSADLFVPPHRRALGYVFQEPSLFAHLSVMDNLLYGHQRIPQWERRVAPEEVIRWLELEPLIGRNTQSLSGGQRQRVAIGRALLTSPKLLLMDEPLASLDLQSKEEILPYLDELFQQLDIPVFYVSHSPDEVMRLASHLVLLDHGCVRAGGPINELLTRPDLPLAHLEEASAVVHATIQAHDLEYHQTLLSVPGGVLAVHHKQGPIGQQVRLRIHAKDVSLALKPPELSSISNCIPVKVIDINVDREPSQVVVRLALGEETILSRVTRRSIDQLNIERGMSVFAQVKSVALID</sequence>
<feature type="chain" id="PRO_0000271675" description="Molybdenum import ATP-binding protein ModC">
    <location>
        <begin position="1"/>
        <end position="358"/>
    </location>
</feature>
<feature type="domain" description="ABC transporter" evidence="1">
    <location>
        <begin position="2"/>
        <end position="234"/>
    </location>
</feature>
<feature type="domain" description="Mop" evidence="2">
    <location>
        <begin position="293"/>
        <end position="358"/>
    </location>
</feature>
<feature type="binding site" evidence="1">
    <location>
        <begin position="34"/>
        <end position="41"/>
    </location>
    <ligand>
        <name>ATP</name>
        <dbReference type="ChEBI" id="CHEBI:30616"/>
    </ligand>
</feature>
<protein>
    <recommendedName>
        <fullName evidence="1">Molybdenum import ATP-binding protein ModC</fullName>
        <ecNumber evidence="1">7.3.2.5</ecNumber>
    </recommendedName>
</protein>
<name>MODC_HAHCH</name>
<evidence type="ECO:0000255" key="1">
    <source>
        <dbReference type="HAMAP-Rule" id="MF_01705"/>
    </source>
</evidence>
<evidence type="ECO:0000255" key="2">
    <source>
        <dbReference type="PROSITE-ProRule" id="PRU01213"/>
    </source>
</evidence>
<proteinExistence type="inferred from homology"/>
<gene>
    <name evidence="1" type="primary">modC</name>
    <name type="ordered locus">HCH_02452</name>
</gene>
<keyword id="KW-0067">ATP-binding</keyword>
<keyword id="KW-0997">Cell inner membrane</keyword>
<keyword id="KW-1003">Cell membrane</keyword>
<keyword id="KW-0472">Membrane</keyword>
<keyword id="KW-0500">Molybdenum</keyword>
<keyword id="KW-0547">Nucleotide-binding</keyword>
<keyword id="KW-1185">Reference proteome</keyword>
<keyword id="KW-1278">Translocase</keyword>
<keyword id="KW-0813">Transport</keyword>
<accession>Q2SJB5</accession>